<sequence>MKFNVKMLSVTLGLFTSHAFAHTVYENARIYTVNDRQPTASVLVVDQGKIVYVGGNDGAKPFKATATELVDLEGKTVLPGFIESHAHPATVAVMEAGDFVYVDGARTLSQILSQLKAYLVAHPKANYLLAQGFNVASLGLPQGALPTAADLDTVSESVPIVVYDSGMHAGWANSAALNVAHVDANTPDPIPGKHYFERDNKGNPTGFMHESAMHNVVDAQQFNAVENVAEKLQPILKTYHSLGFTAITDVGDTFSTTVAAIARLNEQGKLKVYYQRGYFYDAAKSTEQNIASLKGLREKYHQGNLSINLYKLFMDGTIEMDSGAMYQPYPNGNVVEPFLSQKQINDNVAAALKAGFSVHVHAIGDKAQQSILDAFAANKKINPQLARVIAHNQVFEPQGVQKFAAMKDNLFLQTTPNWAVMYEKDETKTKIGQDAYHHQFLLGQAAREGVAVTSALTILRIPLMR</sequence>
<accession>Q06555</accession>
<accession>Q53463</accession>
<proteinExistence type="inferred from homology"/>
<evidence type="ECO:0000255" key="1"/>
<evidence type="ECO:0000305" key="2"/>
<protein>
    <recommendedName>
        <fullName>Exoenzymes regulatory protein AepA</fullName>
    </recommendedName>
</protein>
<organism>
    <name type="scientific">Pectobacterium carotovorum subsp. carotovorum</name>
    <name type="common">Erwinia carotovora subsp. carotovora</name>
    <dbReference type="NCBI Taxonomy" id="555"/>
    <lineage>
        <taxon>Bacteria</taxon>
        <taxon>Pseudomonadati</taxon>
        <taxon>Pseudomonadota</taxon>
        <taxon>Gammaproteobacteria</taxon>
        <taxon>Enterobacterales</taxon>
        <taxon>Pectobacteriaceae</taxon>
        <taxon>Pectobacterium</taxon>
    </lineage>
</organism>
<gene>
    <name type="primary">aepA</name>
</gene>
<reference key="1">
    <citation type="journal article" date="1993" name="Mol. Plant Microbe Interact.">
        <title>Characterization of a novel regulatory gene aepA that controls extracellular enzyme production in the phytopathogenic bacterium Erwinia carotovora subsp. carotovora.</title>
        <authorList>
            <person name="Liu Y."/>
            <person name="Murata H."/>
            <person name="Chatterjee A."/>
            <person name="Chatterjee A.K."/>
        </authorList>
    </citation>
    <scope>NUCLEOTIDE SEQUENCE [GENOMIC DNA]</scope>
    <source>
        <strain>71</strain>
    </source>
</reference>
<reference key="2">
    <citation type="journal article" date="1994" name="Appl. Environ. Microbiol.">
        <title>Regulation of the production of extracellular pectinase, cellulase, and protease in the soft rot bacterium Erwinia carotovora subsp. carotovora: evidence that aepH of E. carotovora subsp. carotovora 71 activates gene expression in E. carotovora subsp. carotovora, E. carotovora subsp. atroseptica, and Escherichia coli.</title>
        <authorList>
            <person name="Murata H."/>
            <person name="Chatterjee A."/>
            <person name="Liu Y."/>
            <person name="Chatterjee A.K."/>
        </authorList>
    </citation>
    <scope>NUCLEOTIDE SEQUENCE [GENOMIC DNA] OF 1-34</scope>
    <source>
        <strain>71</strain>
    </source>
</reference>
<comment type="function">
    <text>Involved in the control of extracellular enzymes production. Stimulates PEL, PEH, CEL, and PRT production.</text>
</comment>
<comment type="similarity">
    <text evidence="2">Belongs to the metallo-dependent hydrolases superfamily.</text>
</comment>
<dbReference type="EMBL" id="L13457">
    <property type="protein sequence ID" value="AAA71984.1"/>
    <property type="molecule type" value="Unassigned_DNA"/>
</dbReference>
<dbReference type="EMBL" id="S74077">
    <property type="protein sequence ID" value="AAB32244.1"/>
    <property type="molecule type" value="Genomic_DNA"/>
</dbReference>
<dbReference type="SMR" id="Q06555"/>
<dbReference type="GO" id="GO:0016810">
    <property type="term" value="F:hydrolase activity, acting on carbon-nitrogen (but not peptide) bonds"/>
    <property type="evidence" value="ECO:0007669"/>
    <property type="project" value="InterPro"/>
</dbReference>
<dbReference type="Gene3D" id="3.10.310.70">
    <property type="match status" value="1"/>
</dbReference>
<dbReference type="Gene3D" id="3.20.20.140">
    <property type="entry name" value="Metal-dependent hydrolases"/>
    <property type="match status" value="1"/>
</dbReference>
<dbReference type="Gene3D" id="2.30.40.10">
    <property type="entry name" value="Urease, subunit C, domain 1"/>
    <property type="match status" value="1"/>
</dbReference>
<dbReference type="InterPro" id="IPR013108">
    <property type="entry name" value="Amidohydro_3"/>
</dbReference>
<dbReference type="InterPro" id="IPR011059">
    <property type="entry name" value="Metal-dep_hydrolase_composite"/>
</dbReference>
<dbReference type="InterPro" id="IPR032466">
    <property type="entry name" value="Metal_Hydrolase"/>
</dbReference>
<dbReference type="PANTHER" id="PTHR22642">
    <property type="entry name" value="IMIDAZOLONEPROPIONASE"/>
    <property type="match status" value="1"/>
</dbReference>
<dbReference type="PANTHER" id="PTHR22642:SF2">
    <property type="entry name" value="PROTEIN LONG AFTER FAR-RED 3"/>
    <property type="match status" value="1"/>
</dbReference>
<dbReference type="Pfam" id="PF07969">
    <property type="entry name" value="Amidohydro_3"/>
    <property type="match status" value="1"/>
</dbReference>
<dbReference type="SUPFAM" id="SSF51338">
    <property type="entry name" value="Composite domain of metallo-dependent hydrolases"/>
    <property type="match status" value="1"/>
</dbReference>
<dbReference type="SUPFAM" id="SSF51556">
    <property type="entry name" value="Metallo-dependent hydrolases"/>
    <property type="match status" value="1"/>
</dbReference>
<keyword id="KW-0732">Signal</keyword>
<feature type="signal peptide" evidence="1">
    <location>
        <begin position="1"/>
        <end position="21"/>
    </location>
</feature>
<feature type="chain" id="PRO_0000020635" description="Exoenzymes regulatory protein AepA">
    <location>
        <begin position="22"/>
        <end position="465"/>
    </location>
</feature>
<name>AEPA_PECCC</name>